<name>CTSR_STAS1</name>
<keyword id="KW-0238">DNA-binding</keyword>
<keyword id="KW-1185">Reference proteome</keyword>
<keyword id="KW-0678">Repressor</keyword>
<keyword id="KW-0346">Stress response</keyword>
<keyword id="KW-0804">Transcription</keyword>
<keyword id="KW-0805">Transcription regulation</keyword>
<evidence type="ECO:0000250" key="1"/>
<evidence type="ECO:0000305" key="2"/>
<proteinExistence type="inferred from homology"/>
<dbReference type="EMBL" id="AP008934">
    <property type="protein sequence ID" value="BAE19379.1"/>
    <property type="molecule type" value="Genomic_DNA"/>
</dbReference>
<dbReference type="RefSeq" id="WP_011303854.1">
    <property type="nucleotide sequence ID" value="NZ_MTGA01000039.1"/>
</dbReference>
<dbReference type="SMR" id="Q49V31"/>
<dbReference type="GeneID" id="3615564"/>
<dbReference type="KEGG" id="ssp:SSP2234"/>
<dbReference type="PATRIC" id="fig|342451.11.peg.2225"/>
<dbReference type="eggNOG" id="COG4463">
    <property type="taxonomic scope" value="Bacteria"/>
</dbReference>
<dbReference type="HOGENOM" id="CLU_118139_0_0_9"/>
<dbReference type="OrthoDB" id="1680813at2"/>
<dbReference type="Proteomes" id="UP000006371">
    <property type="component" value="Chromosome"/>
</dbReference>
<dbReference type="GO" id="GO:0003677">
    <property type="term" value="F:DNA binding"/>
    <property type="evidence" value="ECO:0007669"/>
    <property type="project" value="UniProtKB-KW"/>
</dbReference>
<dbReference type="GO" id="GO:0006355">
    <property type="term" value="P:regulation of DNA-templated transcription"/>
    <property type="evidence" value="ECO:0007669"/>
    <property type="project" value="InterPro"/>
</dbReference>
<dbReference type="FunFam" id="3.30.56.130:FF:000001">
    <property type="entry name" value="Transcriptional regulator CtsR"/>
    <property type="match status" value="1"/>
</dbReference>
<dbReference type="Gene3D" id="1.10.1200.150">
    <property type="entry name" value="Transcriptional regulator CtsR, C-terminal domain"/>
    <property type="match status" value="1"/>
</dbReference>
<dbReference type="Gene3D" id="3.30.56.130">
    <property type="entry name" value="Transcriptional regulator CtsR, winged HTH domain"/>
    <property type="match status" value="1"/>
</dbReference>
<dbReference type="InterPro" id="IPR008463">
    <property type="entry name" value="CtsR"/>
</dbReference>
<dbReference type="InterPro" id="IPR041473">
    <property type="entry name" value="CtsR_C"/>
</dbReference>
<dbReference type="InterPro" id="IPR041908">
    <property type="entry name" value="CtsR_C_sf"/>
</dbReference>
<dbReference type="InterPro" id="IPR040465">
    <property type="entry name" value="CtsR_N"/>
</dbReference>
<dbReference type="InterPro" id="IPR041902">
    <property type="entry name" value="CtsR_N_sf"/>
</dbReference>
<dbReference type="Pfam" id="PF05848">
    <property type="entry name" value="CtsR"/>
    <property type="match status" value="1"/>
</dbReference>
<dbReference type="Pfam" id="PF17727">
    <property type="entry name" value="CtsR_C"/>
    <property type="match status" value="1"/>
</dbReference>
<dbReference type="PIRSF" id="PIRSF010607">
    <property type="entry name" value="Txn_repr_CtsR"/>
    <property type="match status" value="1"/>
</dbReference>
<reference key="1">
    <citation type="journal article" date="2005" name="Proc. Natl. Acad. Sci. U.S.A.">
        <title>Whole genome sequence of Staphylococcus saprophyticus reveals the pathogenesis of uncomplicated urinary tract infection.</title>
        <authorList>
            <person name="Kuroda M."/>
            <person name="Yamashita A."/>
            <person name="Hirakawa H."/>
            <person name="Kumano M."/>
            <person name="Morikawa K."/>
            <person name="Higashide M."/>
            <person name="Maruyama A."/>
            <person name="Inose Y."/>
            <person name="Matoba K."/>
            <person name="Toh H."/>
            <person name="Kuhara S."/>
            <person name="Hattori M."/>
            <person name="Ohta T."/>
        </authorList>
    </citation>
    <scope>NUCLEOTIDE SEQUENCE [LARGE SCALE GENOMIC DNA]</scope>
    <source>
        <strain>ATCC 15305 / DSM 20229 / NCIMB 8711 / NCTC 7292 / S-41</strain>
    </source>
</reference>
<accession>Q49V31</accession>
<feature type="chain" id="PRO_0000274140" description="Transcriptional regulator CtsR">
    <location>
        <begin position="1"/>
        <end position="153"/>
    </location>
</feature>
<comment type="function">
    <text evidence="1">Negative regulator of clpC, clpB and clpP transcription by binding directly and specifically to their promoter region.</text>
</comment>
<comment type="similarity">
    <text evidence="2">Belongs to the CtsR family.</text>
</comment>
<gene>
    <name type="primary">ctsR</name>
    <name type="ordered locus">SSP2234</name>
</gene>
<protein>
    <recommendedName>
        <fullName>Transcriptional regulator CtsR</fullName>
    </recommendedName>
</protein>
<sequence length="153" mass="18020">MHNMSDIIEQYIKKLFEDTNEDVVEIRRTNIAQRFDCVPSQLNYVIKTRFTNEHGYEIESKRGGGGYIRITKIENKDETGYINHLLQLVGPSISQQQAYYIVDGLLDKSYINEREAKMIYAVIDRETLKMDILSRDIIRANIIKRLLHVINYY</sequence>
<organism>
    <name type="scientific">Staphylococcus saprophyticus subsp. saprophyticus (strain ATCC 15305 / DSM 20229 / NCIMB 8711 / NCTC 7292 / S-41)</name>
    <dbReference type="NCBI Taxonomy" id="342451"/>
    <lineage>
        <taxon>Bacteria</taxon>
        <taxon>Bacillati</taxon>
        <taxon>Bacillota</taxon>
        <taxon>Bacilli</taxon>
        <taxon>Bacillales</taxon>
        <taxon>Staphylococcaceae</taxon>
        <taxon>Staphylococcus</taxon>
    </lineage>
</organism>